<reference key="1">
    <citation type="journal article" date="1993" name="J. Biol. Chem.">
        <title>Multiple mRNA isoforms encoding the mouse cardiac Kv1-5 delayed rectifier K+ channel.</title>
        <authorList>
            <person name="Attali B."/>
            <person name="Lesage F."/>
            <person name="Ziliani P."/>
            <person name="Guillemare E."/>
            <person name="Honore E."/>
            <person name="Waldmann R."/>
            <person name="Hugnot J.-P."/>
            <person name="Mattei M.-G."/>
            <person name="Lazdunski M."/>
            <person name="Barhanin J."/>
        </authorList>
    </citation>
    <scope>NUCLEOTIDE SEQUENCE [MRNA] (ISOFORMS 1; 2 AND 3)</scope>
    <scope>FUNCTION (ISOFORMS 1; 2 AND 3)</scope>
    <scope>SUBCELLULAR LOCATION</scope>
    <scope>TRANSPORTER ACTIVITY (ISOFORMS 1 AND 2)</scope>
    <source>
        <strain>SWR/J</strain>
        <tissue>Heart</tissue>
    </source>
</reference>
<reference key="2">
    <citation type="journal article" date="2001" name="Circ. Res.">
        <title>Targeted replacement of KV1.5 in the mouse leads to loss of the 4-aminopyridine-sensitive component of I(K,slow) and resistance to drug-induced qt prolongation.</title>
        <authorList>
            <person name="London B."/>
            <person name="Guo W."/>
            <person name="Pan X."/>
            <person name="Lee J.S."/>
            <person name="Shusterman V."/>
            <person name="Rocco C.J."/>
            <person name="Logothetis D.A."/>
            <person name="Nerbonne J.M."/>
            <person name="Hill J.A."/>
        </authorList>
    </citation>
    <scope>NUCLEOTIDE SEQUENCE [GENOMIC DNA]</scope>
    <scope>DISRUPTION PHENOTYPE</scope>
    <scope>FUNCTION</scope>
    <scope>SUBCELLULAR LOCATION</scope>
    <scope>TRANSPORTER ACTIVITY</scope>
    <source>
        <strain>129/Sv</strain>
    </source>
</reference>
<reference key="3">
    <citation type="submission" date="1998-11" db="EMBL/GenBank/DDBJ databases">
        <title>Cloning and functional expression of mouse heart K+ channel alpha-subunits, Kv1.5, Kv4.2, and Kv4.3.</title>
        <authorList>
            <person name="Tanaka H."/>
            <person name="Janzen K."/>
            <person name="Winkfein R.J."/>
            <person name="Fiset C."/>
            <person name="Clark B."/>
            <person name="Giles W.R."/>
        </authorList>
    </citation>
    <scope>NUCLEOTIDE SEQUENCE [MRNA]</scope>
</reference>
<reference key="4">
    <citation type="journal article" date="2005" name="Science">
        <title>The transcriptional landscape of the mammalian genome.</title>
        <authorList>
            <person name="Carninci P."/>
            <person name="Kasukawa T."/>
            <person name="Katayama S."/>
            <person name="Gough J."/>
            <person name="Frith M.C."/>
            <person name="Maeda N."/>
            <person name="Oyama R."/>
            <person name="Ravasi T."/>
            <person name="Lenhard B."/>
            <person name="Wells C."/>
            <person name="Kodzius R."/>
            <person name="Shimokawa K."/>
            <person name="Bajic V.B."/>
            <person name="Brenner S.E."/>
            <person name="Batalov S."/>
            <person name="Forrest A.R."/>
            <person name="Zavolan M."/>
            <person name="Davis M.J."/>
            <person name="Wilming L.G."/>
            <person name="Aidinis V."/>
            <person name="Allen J.E."/>
            <person name="Ambesi-Impiombato A."/>
            <person name="Apweiler R."/>
            <person name="Aturaliya R.N."/>
            <person name="Bailey T.L."/>
            <person name="Bansal M."/>
            <person name="Baxter L."/>
            <person name="Beisel K.W."/>
            <person name="Bersano T."/>
            <person name="Bono H."/>
            <person name="Chalk A.M."/>
            <person name="Chiu K.P."/>
            <person name="Choudhary V."/>
            <person name="Christoffels A."/>
            <person name="Clutterbuck D.R."/>
            <person name="Crowe M.L."/>
            <person name="Dalla E."/>
            <person name="Dalrymple B.P."/>
            <person name="de Bono B."/>
            <person name="Della Gatta G."/>
            <person name="di Bernardo D."/>
            <person name="Down T."/>
            <person name="Engstrom P."/>
            <person name="Fagiolini M."/>
            <person name="Faulkner G."/>
            <person name="Fletcher C.F."/>
            <person name="Fukushima T."/>
            <person name="Furuno M."/>
            <person name="Futaki S."/>
            <person name="Gariboldi M."/>
            <person name="Georgii-Hemming P."/>
            <person name="Gingeras T.R."/>
            <person name="Gojobori T."/>
            <person name="Green R.E."/>
            <person name="Gustincich S."/>
            <person name="Harbers M."/>
            <person name="Hayashi Y."/>
            <person name="Hensch T.K."/>
            <person name="Hirokawa N."/>
            <person name="Hill D."/>
            <person name="Huminiecki L."/>
            <person name="Iacono M."/>
            <person name="Ikeo K."/>
            <person name="Iwama A."/>
            <person name="Ishikawa T."/>
            <person name="Jakt M."/>
            <person name="Kanapin A."/>
            <person name="Katoh M."/>
            <person name="Kawasawa Y."/>
            <person name="Kelso J."/>
            <person name="Kitamura H."/>
            <person name="Kitano H."/>
            <person name="Kollias G."/>
            <person name="Krishnan S.P."/>
            <person name="Kruger A."/>
            <person name="Kummerfeld S.K."/>
            <person name="Kurochkin I.V."/>
            <person name="Lareau L.F."/>
            <person name="Lazarevic D."/>
            <person name="Lipovich L."/>
            <person name="Liu J."/>
            <person name="Liuni S."/>
            <person name="McWilliam S."/>
            <person name="Madan Babu M."/>
            <person name="Madera M."/>
            <person name="Marchionni L."/>
            <person name="Matsuda H."/>
            <person name="Matsuzawa S."/>
            <person name="Miki H."/>
            <person name="Mignone F."/>
            <person name="Miyake S."/>
            <person name="Morris K."/>
            <person name="Mottagui-Tabar S."/>
            <person name="Mulder N."/>
            <person name="Nakano N."/>
            <person name="Nakauchi H."/>
            <person name="Ng P."/>
            <person name="Nilsson R."/>
            <person name="Nishiguchi S."/>
            <person name="Nishikawa S."/>
            <person name="Nori F."/>
            <person name="Ohara O."/>
            <person name="Okazaki Y."/>
            <person name="Orlando V."/>
            <person name="Pang K.C."/>
            <person name="Pavan W.J."/>
            <person name="Pavesi G."/>
            <person name="Pesole G."/>
            <person name="Petrovsky N."/>
            <person name="Piazza S."/>
            <person name="Reed J."/>
            <person name="Reid J.F."/>
            <person name="Ring B.Z."/>
            <person name="Ringwald M."/>
            <person name="Rost B."/>
            <person name="Ruan Y."/>
            <person name="Salzberg S.L."/>
            <person name="Sandelin A."/>
            <person name="Schneider C."/>
            <person name="Schoenbach C."/>
            <person name="Sekiguchi K."/>
            <person name="Semple C.A."/>
            <person name="Seno S."/>
            <person name="Sessa L."/>
            <person name="Sheng Y."/>
            <person name="Shibata Y."/>
            <person name="Shimada H."/>
            <person name="Shimada K."/>
            <person name="Silva D."/>
            <person name="Sinclair B."/>
            <person name="Sperling S."/>
            <person name="Stupka E."/>
            <person name="Sugiura K."/>
            <person name="Sultana R."/>
            <person name="Takenaka Y."/>
            <person name="Taki K."/>
            <person name="Tammoja K."/>
            <person name="Tan S.L."/>
            <person name="Tang S."/>
            <person name="Taylor M.S."/>
            <person name="Tegner J."/>
            <person name="Teichmann S.A."/>
            <person name="Ueda H.R."/>
            <person name="van Nimwegen E."/>
            <person name="Verardo R."/>
            <person name="Wei C.L."/>
            <person name="Yagi K."/>
            <person name="Yamanishi H."/>
            <person name="Zabarovsky E."/>
            <person name="Zhu S."/>
            <person name="Zimmer A."/>
            <person name="Hide W."/>
            <person name="Bult C."/>
            <person name="Grimmond S.M."/>
            <person name="Teasdale R.D."/>
            <person name="Liu E.T."/>
            <person name="Brusic V."/>
            <person name="Quackenbush J."/>
            <person name="Wahlestedt C."/>
            <person name="Mattick J.S."/>
            <person name="Hume D.A."/>
            <person name="Kai C."/>
            <person name="Sasaki D."/>
            <person name="Tomaru Y."/>
            <person name="Fukuda S."/>
            <person name="Kanamori-Katayama M."/>
            <person name="Suzuki M."/>
            <person name="Aoki J."/>
            <person name="Arakawa T."/>
            <person name="Iida J."/>
            <person name="Imamura K."/>
            <person name="Itoh M."/>
            <person name="Kato T."/>
            <person name="Kawaji H."/>
            <person name="Kawagashira N."/>
            <person name="Kawashima T."/>
            <person name="Kojima M."/>
            <person name="Kondo S."/>
            <person name="Konno H."/>
            <person name="Nakano K."/>
            <person name="Ninomiya N."/>
            <person name="Nishio T."/>
            <person name="Okada M."/>
            <person name="Plessy C."/>
            <person name="Shibata K."/>
            <person name="Shiraki T."/>
            <person name="Suzuki S."/>
            <person name="Tagami M."/>
            <person name="Waki K."/>
            <person name="Watahiki A."/>
            <person name="Okamura-Oho Y."/>
            <person name="Suzuki H."/>
            <person name="Kawai J."/>
            <person name="Hayashizaki Y."/>
        </authorList>
    </citation>
    <scope>NUCLEOTIDE SEQUENCE [LARGE SCALE MRNA]</scope>
    <source>
        <strain>C57BL/6J</strain>
        <tissue>Stomach</tissue>
    </source>
</reference>
<reference key="5">
    <citation type="submission" date="2005-07" db="EMBL/GenBank/DDBJ databases">
        <authorList>
            <person name="Mural R.J."/>
            <person name="Adams M.D."/>
            <person name="Myers E.W."/>
            <person name="Smith H.O."/>
            <person name="Venter J.C."/>
        </authorList>
    </citation>
    <scope>NUCLEOTIDE SEQUENCE [LARGE SCALE GENOMIC DNA]</scope>
</reference>
<reference key="6">
    <citation type="journal article" date="2004" name="Genome Res.">
        <title>The status, quality, and expansion of the NIH full-length cDNA project: the Mammalian Gene Collection (MGC).</title>
        <authorList>
            <consortium name="The MGC Project Team"/>
        </authorList>
    </citation>
    <scope>NUCLEOTIDE SEQUENCE [LARGE SCALE MRNA]</scope>
    <source>
        <tissue>Eye</tissue>
    </source>
</reference>
<reference key="7">
    <citation type="journal article" date="2018" name="J. Am. Heart Assoc.">
        <title>Critical Roles of Xirp Proteins in Cardiac Conduction and Their Rare Variants Identified in Sudden Unexplained Nocturnal Death Syndrome and Brugada Syndrome in Chinese Han Population.</title>
        <authorList>
            <person name="Huang L."/>
            <person name="Wu K.H."/>
            <person name="Zhang L."/>
            <person name="Wang Q."/>
            <person name="Tang S."/>
            <person name="Wu Q."/>
            <person name="Jiang P.H."/>
            <person name="Lin J.J."/>
            <person name="Guo J."/>
            <person name="Wang L."/>
            <person name="Loh S.H."/>
            <person name="Cheng J."/>
        </authorList>
    </citation>
    <scope>FUNCTION</scope>
    <scope>INTERACTION WITH XIRP2</scope>
    <scope>TISSUE SPECIFICITY</scope>
</reference>
<protein>
    <recommendedName>
        <fullName>Potassium voltage-gated channel subfamily A member 5</fullName>
    </recommendedName>
    <alternativeName>
        <fullName>Voltage-gated potassium channel subunit Kv1.5</fullName>
        <shortName>KV1-5</shortName>
    </alternativeName>
</protein>
<evidence type="ECO:0000250" key="1"/>
<evidence type="ECO:0000250" key="2">
    <source>
        <dbReference type="UniProtKB" id="P19024"/>
    </source>
</evidence>
<evidence type="ECO:0000250" key="3">
    <source>
        <dbReference type="UniProtKB" id="P22460"/>
    </source>
</evidence>
<evidence type="ECO:0000250" key="4">
    <source>
        <dbReference type="UniProtKB" id="P63142"/>
    </source>
</evidence>
<evidence type="ECO:0000255" key="5"/>
<evidence type="ECO:0000256" key="6">
    <source>
        <dbReference type="SAM" id="MobiDB-lite"/>
    </source>
</evidence>
<evidence type="ECO:0000269" key="7">
    <source>
    </source>
</evidence>
<evidence type="ECO:0000269" key="8">
    <source>
    </source>
</evidence>
<evidence type="ECO:0000269" key="9">
    <source>
    </source>
</evidence>
<evidence type="ECO:0000303" key="10">
    <source>
    </source>
</evidence>
<evidence type="ECO:0000305" key="11"/>
<gene>
    <name type="primary">Kcna5</name>
</gene>
<keyword id="KW-0025">Alternative splicing</keyword>
<keyword id="KW-1003">Cell membrane</keyword>
<keyword id="KW-0325">Glycoprotein</keyword>
<keyword id="KW-0407">Ion channel</keyword>
<keyword id="KW-0406">Ion transport</keyword>
<keyword id="KW-1017">Isopeptide bond</keyword>
<keyword id="KW-0449">Lipoprotein</keyword>
<keyword id="KW-0472">Membrane</keyword>
<keyword id="KW-0564">Palmitate</keyword>
<keyword id="KW-0597">Phosphoprotein</keyword>
<keyword id="KW-0630">Potassium</keyword>
<keyword id="KW-0631">Potassium channel</keyword>
<keyword id="KW-0633">Potassium transport</keyword>
<keyword id="KW-1185">Reference proteome</keyword>
<keyword id="KW-0812">Transmembrane</keyword>
<keyword id="KW-1133">Transmembrane helix</keyword>
<keyword id="KW-0813">Transport</keyword>
<keyword id="KW-0832">Ubl conjugation</keyword>
<keyword id="KW-0851">Voltage-gated channel</keyword>
<accession>Q61762</accession>
<accession>Q9Z1R6</accession>
<proteinExistence type="evidence at protein level"/>
<dbReference type="EMBL" id="L22218">
    <property type="protein sequence ID" value="AAA39365.1"/>
    <property type="molecule type" value="mRNA"/>
</dbReference>
<dbReference type="EMBL" id="AF108659">
    <property type="protein sequence ID" value="AAD13779.1"/>
    <property type="molecule type" value="mRNA"/>
</dbReference>
<dbReference type="EMBL" id="AF302768">
    <property type="protein sequence ID" value="AAG40241.1"/>
    <property type="molecule type" value="Genomic_DNA"/>
</dbReference>
<dbReference type="EMBL" id="AK146843">
    <property type="protein sequence ID" value="BAE27474.1"/>
    <property type="molecule type" value="mRNA"/>
</dbReference>
<dbReference type="EMBL" id="CH466523">
    <property type="protein sequence ID" value="EDK99840.1"/>
    <property type="molecule type" value="Genomic_DNA"/>
</dbReference>
<dbReference type="EMBL" id="BC021787">
    <property type="protein sequence ID" value="AAH21787.1"/>
    <property type="molecule type" value="mRNA"/>
</dbReference>
<dbReference type="CCDS" id="CCDS20554.1">
    <molecule id="Q61762-1"/>
</dbReference>
<dbReference type="PIR" id="A49507">
    <property type="entry name" value="A49507"/>
</dbReference>
<dbReference type="RefSeq" id="NP_666095.1">
    <molecule id="Q61762-1"/>
    <property type="nucleotide sequence ID" value="NM_145983.2"/>
</dbReference>
<dbReference type="SMR" id="Q61762"/>
<dbReference type="BioGRID" id="200880">
    <property type="interactions" value="1"/>
</dbReference>
<dbReference type="FunCoup" id="Q61762">
    <property type="interactions" value="37"/>
</dbReference>
<dbReference type="IntAct" id="Q61762">
    <property type="interactions" value="1"/>
</dbReference>
<dbReference type="MINT" id="Q61762"/>
<dbReference type="STRING" id="10090.ENSMUSP00000055673"/>
<dbReference type="GlyCosmos" id="Q61762">
    <property type="glycosylation" value="1 site, No reported glycans"/>
</dbReference>
<dbReference type="GlyGen" id="Q61762">
    <property type="glycosylation" value="3 sites"/>
</dbReference>
<dbReference type="iPTMnet" id="Q61762"/>
<dbReference type="PhosphoSitePlus" id="Q61762"/>
<dbReference type="SwissPalm" id="Q61762"/>
<dbReference type="PaxDb" id="10090-ENSMUSP00000055673"/>
<dbReference type="PeptideAtlas" id="Q61762"/>
<dbReference type="ProteomicsDB" id="301769">
    <molecule id="Q61762-1"/>
</dbReference>
<dbReference type="ProteomicsDB" id="301770">
    <molecule id="Q61762-2"/>
</dbReference>
<dbReference type="ProteomicsDB" id="301771">
    <molecule id="Q61762-3"/>
</dbReference>
<dbReference type="Antibodypedia" id="22318">
    <property type="antibodies" value="288 antibodies from 35 providers"/>
</dbReference>
<dbReference type="DNASU" id="16493"/>
<dbReference type="Ensembl" id="ENSMUST00000060972.5">
    <molecule id="Q61762-1"/>
    <property type="protein sequence ID" value="ENSMUSP00000055673.4"/>
    <property type="gene ID" value="ENSMUSG00000045534.5"/>
</dbReference>
<dbReference type="GeneID" id="16493"/>
<dbReference type="KEGG" id="mmu:16493"/>
<dbReference type="UCSC" id="uc009dva.2">
    <molecule id="Q61762-1"/>
    <property type="organism name" value="mouse"/>
</dbReference>
<dbReference type="AGR" id="MGI:96662"/>
<dbReference type="CTD" id="3741"/>
<dbReference type="MGI" id="MGI:96662">
    <property type="gene designation" value="Kcna5"/>
</dbReference>
<dbReference type="VEuPathDB" id="HostDB:ENSMUSG00000045534"/>
<dbReference type="eggNOG" id="KOG1545">
    <property type="taxonomic scope" value="Eukaryota"/>
</dbReference>
<dbReference type="GeneTree" id="ENSGT00940000161860"/>
<dbReference type="HOGENOM" id="CLU_011722_4_0_1"/>
<dbReference type="InParanoid" id="Q61762"/>
<dbReference type="OMA" id="PWKINDM"/>
<dbReference type="OrthoDB" id="415460at2759"/>
<dbReference type="PhylomeDB" id="Q61762"/>
<dbReference type="TreeFam" id="TF313103"/>
<dbReference type="Reactome" id="R-MMU-1296072">
    <property type="pathway name" value="Voltage gated Potassium channels"/>
</dbReference>
<dbReference type="Reactome" id="R-MMU-5576890">
    <property type="pathway name" value="Phase 3 - rapid repolarisation"/>
</dbReference>
<dbReference type="BioGRID-ORCS" id="16493">
    <property type="hits" value="2 hits in 76 CRISPR screens"/>
</dbReference>
<dbReference type="PRO" id="PR:Q61762"/>
<dbReference type="Proteomes" id="UP000000589">
    <property type="component" value="Chromosome 6"/>
</dbReference>
<dbReference type="RNAct" id="Q61762">
    <property type="molecule type" value="protein"/>
</dbReference>
<dbReference type="Bgee" id="ENSMUSG00000045534">
    <property type="expression patterns" value="Expressed in olfactory epithelium and 163 other cell types or tissues"/>
</dbReference>
<dbReference type="GO" id="GO:0009986">
    <property type="term" value="C:cell surface"/>
    <property type="evidence" value="ECO:0007669"/>
    <property type="project" value="Ensembl"/>
</dbReference>
<dbReference type="GO" id="GO:0014704">
    <property type="term" value="C:intercalated disc"/>
    <property type="evidence" value="ECO:0000314"/>
    <property type="project" value="MGI"/>
</dbReference>
<dbReference type="GO" id="GO:0046691">
    <property type="term" value="C:intracellular canaliculus"/>
    <property type="evidence" value="ECO:0007669"/>
    <property type="project" value="Ensembl"/>
</dbReference>
<dbReference type="GO" id="GO:0016020">
    <property type="term" value="C:membrane"/>
    <property type="evidence" value="ECO:0000314"/>
    <property type="project" value="MGI"/>
</dbReference>
<dbReference type="GO" id="GO:0045121">
    <property type="term" value="C:membrane raft"/>
    <property type="evidence" value="ECO:0007669"/>
    <property type="project" value="Ensembl"/>
</dbReference>
<dbReference type="GO" id="GO:0048471">
    <property type="term" value="C:perinuclear region of cytoplasm"/>
    <property type="evidence" value="ECO:0007669"/>
    <property type="project" value="Ensembl"/>
</dbReference>
<dbReference type="GO" id="GO:0005886">
    <property type="term" value="C:plasma membrane"/>
    <property type="evidence" value="ECO:0000314"/>
    <property type="project" value="MGI"/>
</dbReference>
<dbReference type="GO" id="GO:0034705">
    <property type="term" value="C:potassium channel complex"/>
    <property type="evidence" value="ECO:0000250"/>
    <property type="project" value="UniProtKB"/>
</dbReference>
<dbReference type="GO" id="GO:0008076">
    <property type="term" value="C:voltage-gated potassium channel complex"/>
    <property type="evidence" value="ECO:0000250"/>
    <property type="project" value="UniProtKB"/>
</dbReference>
<dbReference type="GO" id="GO:0030018">
    <property type="term" value="C:Z disc"/>
    <property type="evidence" value="ECO:0007669"/>
    <property type="project" value="Ensembl"/>
</dbReference>
<dbReference type="GO" id="GO:0051393">
    <property type="term" value="F:alpha-actinin binding"/>
    <property type="evidence" value="ECO:0007669"/>
    <property type="project" value="Ensembl"/>
</dbReference>
<dbReference type="GO" id="GO:0005251">
    <property type="term" value="F:delayed rectifier potassium channel activity"/>
    <property type="evidence" value="ECO:0000250"/>
    <property type="project" value="UniProtKB"/>
</dbReference>
<dbReference type="GO" id="GO:0015271">
    <property type="term" value="F:outward rectifier potassium channel activity"/>
    <property type="evidence" value="ECO:0007669"/>
    <property type="project" value="Ensembl"/>
</dbReference>
<dbReference type="GO" id="GO:0019870">
    <property type="term" value="F:potassium channel inhibitor activity"/>
    <property type="evidence" value="ECO:0000314"/>
    <property type="project" value="MGI"/>
</dbReference>
<dbReference type="GO" id="GO:0019901">
    <property type="term" value="F:protein kinase binding"/>
    <property type="evidence" value="ECO:0007669"/>
    <property type="project" value="Ensembl"/>
</dbReference>
<dbReference type="GO" id="GO:0097110">
    <property type="term" value="F:scaffold protein binding"/>
    <property type="evidence" value="ECO:0007669"/>
    <property type="project" value="Ensembl"/>
</dbReference>
<dbReference type="GO" id="GO:0005102">
    <property type="term" value="F:signaling receptor binding"/>
    <property type="evidence" value="ECO:0007669"/>
    <property type="project" value="Ensembl"/>
</dbReference>
<dbReference type="GO" id="GO:0005249">
    <property type="term" value="F:voltage-gated potassium channel activity"/>
    <property type="evidence" value="ECO:0000314"/>
    <property type="project" value="UniProtKB"/>
</dbReference>
<dbReference type="GO" id="GO:0086089">
    <property type="term" value="F:voltage-gated potassium channel activity involved in atrial cardiac muscle cell action potential repolarization"/>
    <property type="evidence" value="ECO:0007669"/>
    <property type="project" value="Ensembl"/>
</dbReference>
<dbReference type="GO" id="GO:0086087">
    <property type="term" value="F:voltage-gated potassium channel activity involved in bundle of His cell action potential repolarization"/>
    <property type="evidence" value="ECO:0007669"/>
    <property type="project" value="Ensembl"/>
</dbReference>
<dbReference type="GO" id="GO:0086090">
    <property type="term" value="F:voltage-gated potassium channel activity involved in SA node cell action potential repolarization"/>
    <property type="evidence" value="ECO:0007669"/>
    <property type="project" value="Ensembl"/>
</dbReference>
<dbReference type="GO" id="GO:0060081">
    <property type="term" value="P:membrane hyperpolarization"/>
    <property type="evidence" value="ECO:0007669"/>
    <property type="project" value="Ensembl"/>
</dbReference>
<dbReference type="GO" id="GO:0098914">
    <property type="term" value="P:membrane repolarization during atrial cardiac muscle cell action potential"/>
    <property type="evidence" value="ECO:0007669"/>
    <property type="project" value="Ensembl"/>
</dbReference>
<dbReference type="GO" id="GO:0051481">
    <property type="term" value="P:negative regulation of cytosolic calcium ion concentration"/>
    <property type="evidence" value="ECO:0007669"/>
    <property type="project" value="Ensembl"/>
</dbReference>
<dbReference type="GO" id="GO:0043267">
    <property type="term" value="P:negative regulation of potassium ion transport"/>
    <property type="evidence" value="ECO:0000314"/>
    <property type="project" value="MGI"/>
</dbReference>
<dbReference type="GO" id="GO:0007219">
    <property type="term" value="P:Notch signaling pathway"/>
    <property type="evidence" value="ECO:0000314"/>
    <property type="project" value="MGI"/>
</dbReference>
<dbReference type="GO" id="GO:1900087">
    <property type="term" value="P:positive regulation of G1/S transition of mitotic cell cycle"/>
    <property type="evidence" value="ECO:0007669"/>
    <property type="project" value="Ensembl"/>
</dbReference>
<dbReference type="GO" id="GO:2000288">
    <property type="term" value="P:positive regulation of myoblast proliferation"/>
    <property type="evidence" value="ECO:0007669"/>
    <property type="project" value="Ensembl"/>
</dbReference>
<dbReference type="GO" id="GO:0097623">
    <property type="term" value="P:potassium ion export across plasma membrane"/>
    <property type="evidence" value="ECO:0007669"/>
    <property type="project" value="Ensembl"/>
</dbReference>
<dbReference type="GO" id="GO:0055075">
    <property type="term" value="P:potassium ion homeostasis"/>
    <property type="evidence" value="ECO:0007669"/>
    <property type="project" value="Ensembl"/>
</dbReference>
<dbReference type="GO" id="GO:0006813">
    <property type="term" value="P:potassium ion transport"/>
    <property type="evidence" value="ECO:0000314"/>
    <property type="project" value="MGI"/>
</dbReference>
<dbReference type="GO" id="GO:0051260">
    <property type="term" value="P:protein homooligomerization"/>
    <property type="evidence" value="ECO:0007669"/>
    <property type="project" value="InterPro"/>
</dbReference>
<dbReference type="GO" id="GO:0060372">
    <property type="term" value="P:regulation of atrial cardiac muscle cell membrane repolarization"/>
    <property type="evidence" value="ECO:0007669"/>
    <property type="project" value="Ensembl"/>
</dbReference>
<dbReference type="GO" id="GO:0086091">
    <property type="term" value="P:regulation of heart rate by cardiac conduction"/>
    <property type="evidence" value="ECO:0007669"/>
    <property type="project" value="Ensembl"/>
</dbReference>
<dbReference type="GO" id="GO:0042391">
    <property type="term" value="P:regulation of membrane potential"/>
    <property type="evidence" value="ECO:0000316"/>
    <property type="project" value="MGI"/>
</dbReference>
<dbReference type="GO" id="GO:0043266">
    <property type="term" value="P:regulation of potassium ion transport"/>
    <property type="evidence" value="ECO:0007669"/>
    <property type="project" value="Ensembl"/>
</dbReference>
<dbReference type="GO" id="GO:0019229">
    <property type="term" value="P:regulation of vasoconstriction"/>
    <property type="evidence" value="ECO:0000315"/>
    <property type="project" value="MGI"/>
</dbReference>
<dbReference type="GO" id="GO:0042542">
    <property type="term" value="P:response to hydrogen peroxide"/>
    <property type="evidence" value="ECO:0007669"/>
    <property type="project" value="Ensembl"/>
</dbReference>
<dbReference type="GO" id="GO:0055093">
    <property type="term" value="P:response to hyperoxia"/>
    <property type="evidence" value="ECO:0007669"/>
    <property type="project" value="Ensembl"/>
</dbReference>
<dbReference type="GO" id="GO:0001666">
    <property type="term" value="P:response to hypoxia"/>
    <property type="evidence" value="ECO:0007669"/>
    <property type="project" value="Ensembl"/>
</dbReference>
<dbReference type="GO" id="GO:0009612">
    <property type="term" value="P:response to mechanical stimulus"/>
    <property type="evidence" value="ECO:0007669"/>
    <property type="project" value="Ensembl"/>
</dbReference>
<dbReference type="FunFam" id="1.10.287.70:FF:000002">
    <property type="entry name" value="Potassium voltage-gated channel subfamily a member"/>
    <property type="match status" value="1"/>
</dbReference>
<dbReference type="FunFam" id="3.30.710.10:FF:000012">
    <property type="entry name" value="Potassium voltage-gated channel subfamily A member 10"/>
    <property type="match status" value="1"/>
</dbReference>
<dbReference type="FunFam" id="1.20.120.350:FF:000025">
    <property type="entry name" value="Potassium voltage-gated channel subfamily A member 2"/>
    <property type="match status" value="1"/>
</dbReference>
<dbReference type="Gene3D" id="1.10.287.70">
    <property type="match status" value="1"/>
</dbReference>
<dbReference type="Gene3D" id="3.30.710.10">
    <property type="entry name" value="Potassium Channel Kv1.1, Chain A"/>
    <property type="match status" value="1"/>
</dbReference>
<dbReference type="Gene3D" id="1.20.120.350">
    <property type="entry name" value="Voltage-gated potassium channels. Chain C"/>
    <property type="match status" value="1"/>
</dbReference>
<dbReference type="InterPro" id="IPR000210">
    <property type="entry name" value="BTB/POZ_dom"/>
</dbReference>
<dbReference type="InterPro" id="IPR005821">
    <property type="entry name" value="Ion_trans_dom"/>
</dbReference>
<dbReference type="InterPro" id="IPR003968">
    <property type="entry name" value="K_chnl_volt-dep_Kv"/>
</dbReference>
<dbReference type="InterPro" id="IPR003972">
    <property type="entry name" value="K_chnl_volt-dep_Kv1"/>
</dbReference>
<dbReference type="InterPro" id="IPR004052">
    <property type="entry name" value="K_chnl_volt-dep_Kv1.5"/>
</dbReference>
<dbReference type="InterPro" id="IPR011333">
    <property type="entry name" value="SKP1/BTB/POZ_sf"/>
</dbReference>
<dbReference type="InterPro" id="IPR003131">
    <property type="entry name" value="T1-type_BTB"/>
</dbReference>
<dbReference type="InterPro" id="IPR028325">
    <property type="entry name" value="VG_K_chnl"/>
</dbReference>
<dbReference type="InterPro" id="IPR027359">
    <property type="entry name" value="Volt_channel_dom_sf"/>
</dbReference>
<dbReference type="PANTHER" id="PTHR11537:SF250">
    <property type="entry name" value="POTASSIUM VOLTAGE-GATED CHANNEL SUBFAMILY A MEMBER 5"/>
    <property type="match status" value="1"/>
</dbReference>
<dbReference type="PANTHER" id="PTHR11537">
    <property type="entry name" value="VOLTAGE-GATED POTASSIUM CHANNEL"/>
    <property type="match status" value="1"/>
</dbReference>
<dbReference type="Pfam" id="PF02214">
    <property type="entry name" value="BTB_2"/>
    <property type="match status" value="1"/>
</dbReference>
<dbReference type="Pfam" id="PF00520">
    <property type="entry name" value="Ion_trans"/>
    <property type="match status" value="1"/>
</dbReference>
<dbReference type="PRINTS" id="PR00169">
    <property type="entry name" value="KCHANNEL"/>
</dbReference>
<dbReference type="PRINTS" id="PR01512">
    <property type="entry name" value="KV15CHANNEL"/>
</dbReference>
<dbReference type="PRINTS" id="PR01491">
    <property type="entry name" value="KVCHANNEL"/>
</dbReference>
<dbReference type="PRINTS" id="PR01496">
    <property type="entry name" value="SHAKERCHANEL"/>
</dbReference>
<dbReference type="SMART" id="SM00225">
    <property type="entry name" value="BTB"/>
    <property type="match status" value="1"/>
</dbReference>
<dbReference type="SUPFAM" id="SSF54695">
    <property type="entry name" value="POZ domain"/>
    <property type="match status" value="1"/>
</dbReference>
<dbReference type="SUPFAM" id="SSF81324">
    <property type="entry name" value="Voltage-gated potassium channels"/>
    <property type="match status" value="1"/>
</dbReference>
<sequence>MEISLVPMENGSAMTLRGGGEAGASCVQSPRGECGCPPTAGLNNQSKETSPRRRATHEDAGQGGRPLPPMPQELPQPRRPSAEDEEGEGDPGLGTVEEDQAPQDSGSLHHQRVLINISGLRFETQLGTLAQFPNTLLGDPVKRLRYFDPLRNEYFFDRNRPSFDGILYYYQSGGRLRRPVNVSLDVFADEIRFYQLGDEAMERFREDEGFIKEEEKPLPRNEFQRQVWLIFEYPESSGSARAIAIVSVLVILISIITFCLETLPEFRDERELLRHPPVPPQPPAPAPGANGSGSGVLSSGPTVAPLLPRTLADPFFIVETTCVIWFTFELLVRFFACPSKAEFSRNIMNIIDIVAIFPYFITLGTELAEQQPGGGGQNGQQAMSLAILRVIRLVRVFRIFKLSRHSKGLQILGKTLQASMRELGLLIFFLFIGVILFSSAVYFAEADNQGSHFSSIPDAFWWAVVTMTTVGYGDMRPITVGGKIVGSLCAIAGVLTIALPVPVIVSNFNYFYHRETDHEEQAALKEEQGIQRRESGLDTGGQRKVSCSKASFCKTGGPLESTDSIRRGSCPLEKCHLKAKSNVDLRRSLYALCLDTSRETDL</sequence>
<name>KCNA5_MOUSE</name>
<feature type="chain" id="PRO_0000053986" description="Potassium voltage-gated channel subfamily A member 5">
    <location>
        <begin position="1"/>
        <end position="602"/>
    </location>
</feature>
<feature type="topological domain" description="Cytoplasmic" evidence="4">
    <location>
        <begin position="1"/>
        <end position="238"/>
    </location>
</feature>
<feature type="transmembrane region" description="Helical; Name=Segment S1" evidence="4">
    <location>
        <begin position="239"/>
        <end position="260"/>
    </location>
</feature>
<feature type="topological domain" description="Extracellular" evidence="4">
    <location>
        <begin position="261"/>
        <end position="314"/>
    </location>
</feature>
<feature type="transmembrane region" description="Helical; Name=Segment S2" evidence="4">
    <location>
        <begin position="315"/>
        <end position="336"/>
    </location>
</feature>
<feature type="topological domain" description="Cytoplasmic" evidence="4">
    <location>
        <begin position="337"/>
        <end position="347"/>
    </location>
</feature>
<feature type="transmembrane region" description="Helical; Name=Segment S3" evidence="4">
    <location>
        <begin position="348"/>
        <end position="368"/>
    </location>
</feature>
<feature type="topological domain" description="Extracellular" evidence="4">
    <location>
        <begin position="369"/>
        <end position="384"/>
    </location>
</feature>
<feature type="transmembrane region" description="Helical; Voltage-sensor; Name=Segment S4" evidence="4">
    <location>
        <begin position="385"/>
        <end position="405"/>
    </location>
</feature>
<feature type="topological domain" description="Cytoplasmic" evidence="4">
    <location>
        <begin position="406"/>
        <end position="420"/>
    </location>
</feature>
<feature type="transmembrane region" description="Helical; Name=Segment S5" evidence="4">
    <location>
        <begin position="421"/>
        <end position="442"/>
    </location>
</feature>
<feature type="topological domain" description="Extracellular" evidence="4">
    <location>
        <begin position="443"/>
        <end position="456"/>
    </location>
</feature>
<feature type="intramembrane region" description="Helical; Name=Pore helix" evidence="4">
    <location>
        <begin position="457"/>
        <end position="468"/>
    </location>
</feature>
<feature type="intramembrane region" evidence="4">
    <location>
        <begin position="469"/>
        <end position="476"/>
    </location>
</feature>
<feature type="topological domain" description="Extracellular" evidence="4">
    <location>
        <begin position="477"/>
        <end position="483"/>
    </location>
</feature>
<feature type="transmembrane region" description="Helical; Name=Segment S6" evidence="4">
    <location>
        <begin position="484"/>
        <end position="512"/>
    </location>
</feature>
<feature type="topological domain" description="Cytoplasmic" evidence="4">
    <location>
        <begin position="513"/>
        <end position="602"/>
    </location>
</feature>
<feature type="region of interest" description="Tetramerization domain" evidence="3">
    <location>
        <begin position="1"/>
        <end position="202"/>
    </location>
</feature>
<feature type="region of interest" description="Disordered" evidence="6">
    <location>
        <begin position="1"/>
        <end position="107"/>
    </location>
</feature>
<feature type="region of interest" description="Disordered" evidence="6">
    <location>
        <begin position="274"/>
        <end position="297"/>
    </location>
</feature>
<feature type="region of interest" description="S4-S5 linker" evidence="4">
    <location>
        <begin position="407"/>
        <end position="420"/>
    </location>
</feature>
<feature type="short sequence motif" description="Selectivity filter" evidence="4">
    <location>
        <begin position="469"/>
        <end position="474"/>
    </location>
</feature>
<feature type="short sequence motif" description="PDZ-binding">
    <location>
        <begin position="600"/>
        <end position="602"/>
    </location>
</feature>
<feature type="compositionally biased region" description="Pro residues" evidence="6">
    <location>
        <begin position="66"/>
        <end position="78"/>
    </location>
</feature>
<feature type="compositionally biased region" description="Pro residues" evidence="6">
    <location>
        <begin position="276"/>
        <end position="286"/>
    </location>
</feature>
<feature type="modified residue" description="Phosphoserine; by CK2 and PKA" evidence="5">
    <location>
        <position position="81"/>
    </location>
</feature>
<feature type="modified residue" description="Phosphoserine; by PKA" evidence="5">
    <location>
        <position position="535"/>
    </location>
</feature>
<feature type="modified residue" description="Phosphoserine; by PKA" evidence="5">
    <location>
        <position position="546"/>
    </location>
</feature>
<feature type="modified residue" description="Phosphoserine; by PKA" evidence="5">
    <location>
        <position position="569"/>
    </location>
</feature>
<feature type="lipid moiety-binding region" description="S-palmitoyl cysteine" evidence="5">
    <location>
        <position position="337"/>
    </location>
</feature>
<feature type="glycosylation site" description="N-linked (GlcNAc...) asparagine" evidence="5">
    <location>
        <position position="290"/>
    </location>
</feature>
<feature type="cross-link" description="Glycyl lysine isopeptide (Lys-Gly) (interchain with G-Cter in SUMO)" evidence="3">
    <location>
        <position position="212"/>
    </location>
</feature>
<feature type="cross-link" description="Glycyl lysine isopeptide (Lys-Gly) (interchain with G-Cter in SUMO)" evidence="3">
    <location>
        <position position="525"/>
    </location>
</feature>
<feature type="splice variant" id="VSP_000961" description="In isoform 2." evidence="10">
    <location>
        <begin position="1"/>
        <end position="200"/>
    </location>
</feature>
<feature type="splice variant" id="VSP_000962" description="In isoform 3." evidence="10">
    <location>
        <begin position="515"/>
        <end position="602"/>
    </location>
</feature>
<feature type="sequence conflict" description="In Ref. 1; AAA39365." evidence="11" ref="1">
    <original>M</original>
    <variation>T</variation>
    <location>
        <position position="8"/>
    </location>
</feature>
<feature type="sequence conflict" description="In Ref. 1; AAA39365." evidence="11" ref="1">
    <original>G</original>
    <variation>V</variation>
    <location>
        <position position="23"/>
    </location>
</feature>
<feature type="sequence conflict" description="In Ref. 1; AAA39365." evidence="11" ref="1">
    <original>G</original>
    <variation>A</variation>
    <location>
        <position position="61"/>
    </location>
</feature>
<feature type="sequence conflict" description="In Ref. 1; AAA39365." evidence="11" ref="1">
    <original>G</original>
    <variation>D</variation>
    <location>
        <position position="127"/>
    </location>
</feature>
<feature type="sequence conflict" description="In Ref. 1; AAA39365." evidence="11" ref="1">
    <original>A</original>
    <variation>V</variation>
    <location>
        <position position="130"/>
    </location>
</feature>
<feature type="sequence conflict" description="In Ref. 1; AAA39365." evidence="11" ref="1">
    <original>T</original>
    <variation>N</variation>
    <location>
        <position position="135"/>
    </location>
</feature>
<feature type="sequence conflict" description="In Ref. 1; AAA39365." evidence="11" ref="1">
    <original>L</original>
    <variation>S</variation>
    <location>
        <position position="249"/>
    </location>
</feature>
<feature type="sequence conflict" description="In Ref. 1; AAA39365." evidence="11" ref="1">
    <original>DE</original>
    <variation>VD</variation>
    <location>
        <begin position="268"/>
        <end position="269"/>
    </location>
</feature>
<feature type="sequence conflict" description="In Ref. 1; AAA39365." evidence="11" ref="1">
    <original>R</original>
    <variation>L</variation>
    <location>
        <position position="274"/>
    </location>
</feature>
<feature type="sequence conflict" description="In Ref. 1; AAA39365." evidence="11" ref="1">
    <original>ANG</original>
    <variation>TNA</variation>
    <location>
        <begin position="289"/>
        <end position="291"/>
    </location>
</feature>
<feature type="sequence conflict" description="In Ref. 1; AAA39365." evidence="11" ref="1">
    <original>P</original>
    <variation>T</variation>
    <location>
        <position position="301"/>
    </location>
</feature>
<feature type="sequence conflict" description="In Ref. 1; AAA39365." evidence="11" ref="1">
    <original>HF</original>
    <variation>QL</variation>
    <location>
        <begin position="452"/>
        <end position="453"/>
    </location>
</feature>
<feature type="sequence conflict" description="In Ref. 1; AAA39365." evidence="11" ref="1">
    <original>C</original>
    <variation>H</variation>
    <location>
        <position position="553"/>
    </location>
</feature>
<organism>
    <name type="scientific">Mus musculus</name>
    <name type="common">Mouse</name>
    <dbReference type="NCBI Taxonomy" id="10090"/>
    <lineage>
        <taxon>Eukaryota</taxon>
        <taxon>Metazoa</taxon>
        <taxon>Chordata</taxon>
        <taxon>Craniata</taxon>
        <taxon>Vertebrata</taxon>
        <taxon>Euteleostomi</taxon>
        <taxon>Mammalia</taxon>
        <taxon>Eutheria</taxon>
        <taxon>Euarchontoglires</taxon>
        <taxon>Glires</taxon>
        <taxon>Rodentia</taxon>
        <taxon>Myomorpha</taxon>
        <taxon>Muroidea</taxon>
        <taxon>Muridae</taxon>
        <taxon>Murinae</taxon>
        <taxon>Mus</taxon>
        <taxon>Mus</taxon>
    </lineage>
</organism>
<comment type="function">
    <text evidence="3 7 8 9">Voltage-gated potassium channel that mediates transmembrane potassium transport in excitable membranes. Forms tetrameric potassium-selective channels through which potassium ions pass in accordance with their electrochemical gradient. The channel alternates between opened and closed conformations in response to the voltage difference across the membrane (PubMed:11349004, PubMed:8226976). Can form functional homotetrameric channels and heterotetrameric channels that contain variable proportions of KCNA1, KCNA2, KCNA4, KCNA5, and possibly other family members as well; channel properties depend on the type of alpha subunits that are part of the channel (By similarity). Channel properties are modulated by cytoplasmic beta subunits that regulate the subcellular location of the alpha subunits and promote rapid inactivation (By similarity). Homotetrameric channels display rapid activation and slow inactivation (PubMed:11349004, PubMed:8226976). Required for normal electrical conduction including formation of the infranodal ventricular conduction system and normal action potential configuration, as a result of its interaction with XIRP2 (PubMed:29306897). May play a role in regulating the secretion of insulin in normal pancreatic islets (By similarity).</text>
</comment>
<comment type="function">
    <molecule>Isoform 2</molecule>
    <text evidence="9">Voltage-gated potassium channel that mediates transmembrane potassium transport in excitable membranes. Forms tetrameric potassium-selective channels through which potassium ions pass in accordance with their electrochemical gradient. The channel alternates between opened and closed conformations in response to the voltage difference across the membrane.</text>
</comment>
<comment type="function">
    <molecule>Isoform 3</molecule>
    <text evidence="9">Inactive. Inhibits expression of isoform 1 and isoform 2.</text>
</comment>
<comment type="catalytic activity">
    <molecule>Isoform 1</molecule>
    <reaction evidence="7 9">
        <text>K(+)(in) = K(+)(out)</text>
        <dbReference type="Rhea" id="RHEA:29463"/>
        <dbReference type="ChEBI" id="CHEBI:29103"/>
    </reaction>
</comment>
<comment type="catalytic activity">
    <molecule>Isoform 2</molecule>
    <reaction evidence="9">
        <text>K(+)(in) = K(+)(out)</text>
        <dbReference type="Rhea" id="RHEA:29463"/>
        <dbReference type="ChEBI" id="CHEBI:29103"/>
    </reaction>
</comment>
<comment type="subunit">
    <text evidence="2 3 8">Homotetramer and heterotetramer of potassium channel proteins. Interacts with DLG1, which enhances channel currents. Forms a ternary complex with DLG1 and CAV3 (By similarity). Interacts with KCNAB1 (By similarity). Interacts with UBE2I (By similarity). Interacts with XIRP2; the interaction is required for normal action potential configuration in the heart (PubMed:29306897).</text>
</comment>
<comment type="interaction">
    <interactant intactId="EBI-26520959">
        <id>Q61762</id>
    </interactant>
    <interactant intactId="EBI-10768169">
        <id>Q4U4S6</id>
        <label>Xirp2</label>
    </interactant>
    <organismsDiffer>false</organismsDiffer>
    <experiments>2</experiments>
</comment>
<comment type="subcellular location">
    <subcellularLocation>
        <location evidence="7 9">Cell membrane</location>
        <topology evidence="11">Multi-pass membrane protein</topology>
    </subcellularLocation>
</comment>
<comment type="alternative products">
    <event type="alternative splicing"/>
    <isoform>
        <id>Q61762-1</id>
        <name>1</name>
        <sequence type="displayed"/>
    </isoform>
    <isoform>
        <id>Q61762-2</id>
        <name>2</name>
        <name>5'</name>
        <sequence type="described" ref="VSP_000961"/>
    </isoform>
    <isoform>
        <id>Q61762-3</id>
        <name>3</name>
        <name>3'</name>
        <sequence type="described" ref="VSP_000962"/>
    </isoform>
</comment>
<comment type="tissue specificity">
    <text evidence="8 9">Expressed in the heart (at protein level) (PubMed:29306897, PubMed:8226976). Expressed in the brain and weakly expressed in the thymus, skeletal muscle and spleen (PubMed:8226976).</text>
</comment>
<comment type="domain">
    <text evidence="1">The amino terminus may be important in determining the rate of inactivation of the channel while the C-terminal PDZ-binding motif may play a role in modulation of channel activity and/or targeting of the channel to specific subcellular compartments.</text>
</comment>
<comment type="domain">
    <text evidence="4">The transmembrane segment S4 functions as a voltage-sensor and is characterized by a series of positively charged amino acids at every third position. Channel opening and closing is effected by a conformation change that affects the position and orientation of the voltage-sensor paddle formed by S3 and S4 within the membrane. A transmembrane electric field that is positive inside would push the positively charged S4 segment outwards, thereby opening the pore, while a field that is negative inside would pull the S4 segment inwards and close the pore. Changes in the position and orientation of S4 are then transmitted to the activation gate formed by the inner helix bundle via the S4-S5 linker region.</text>
</comment>
<comment type="PTM">
    <text evidence="3">Glycosylated.</text>
</comment>
<comment type="PTM">
    <text evidence="3">Sumoylated on Lys-212, and Lys-525, preferentially with SUMO3. Sumoylation regulates the voltage sensitivity of the channel (By similarity).</text>
</comment>
<comment type="disruption phenotype">
    <text evidence="7">No visible phenotype. The action potential in myocytes is not prolonged by low concentrations of 4-aminopyridine, contrary to the situation in wild-type.</text>
</comment>
<comment type="similarity">
    <text evidence="11">Belongs to the potassium channel family. A (Shaker) (TC 1.A.1.2) subfamily. Kv1.5/KCNA5 sub-subfamily.</text>
</comment>